<reference key="1">
    <citation type="journal article" date="2011" name="J. Bacteriol.">
        <title>Genome sequence of lineage III Listeria monocytogenes strain HCC23.</title>
        <authorList>
            <person name="Steele C.L."/>
            <person name="Donaldson J.R."/>
            <person name="Paul D."/>
            <person name="Banes M.M."/>
            <person name="Arick T."/>
            <person name="Bridges S.M."/>
            <person name="Lawrence M.L."/>
        </authorList>
    </citation>
    <scope>NUCLEOTIDE SEQUENCE [LARGE SCALE GENOMIC DNA]</scope>
    <source>
        <strain>HCC23</strain>
    </source>
</reference>
<dbReference type="EMBL" id="CP001175">
    <property type="protein sequence ID" value="ACK39449.1"/>
    <property type="molecule type" value="Genomic_DNA"/>
</dbReference>
<dbReference type="RefSeq" id="WP_003719762.1">
    <property type="nucleotide sequence ID" value="NC_011660.1"/>
</dbReference>
<dbReference type="SMR" id="B8DE42"/>
<dbReference type="GeneID" id="93239346"/>
<dbReference type="KEGG" id="lmh:LMHCC_1101"/>
<dbReference type="HOGENOM" id="CLU_159258_3_2_9"/>
<dbReference type="GO" id="GO:1990904">
    <property type="term" value="C:ribonucleoprotein complex"/>
    <property type="evidence" value="ECO:0007669"/>
    <property type="project" value="UniProtKB-KW"/>
</dbReference>
<dbReference type="GO" id="GO:0005840">
    <property type="term" value="C:ribosome"/>
    <property type="evidence" value="ECO:0007669"/>
    <property type="project" value="UniProtKB-KW"/>
</dbReference>
<dbReference type="GO" id="GO:0003735">
    <property type="term" value="F:structural constituent of ribosome"/>
    <property type="evidence" value="ECO:0007669"/>
    <property type="project" value="InterPro"/>
</dbReference>
<dbReference type="GO" id="GO:0006412">
    <property type="term" value="P:translation"/>
    <property type="evidence" value="ECO:0007669"/>
    <property type="project" value="UniProtKB-UniRule"/>
</dbReference>
<dbReference type="Gene3D" id="1.20.5.1150">
    <property type="entry name" value="Ribosomal protein S8"/>
    <property type="match status" value="1"/>
</dbReference>
<dbReference type="HAMAP" id="MF_00358">
    <property type="entry name" value="Ribosomal_bS21"/>
    <property type="match status" value="1"/>
</dbReference>
<dbReference type="InterPro" id="IPR001911">
    <property type="entry name" value="Ribosomal_bS21"/>
</dbReference>
<dbReference type="InterPro" id="IPR018278">
    <property type="entry name" value="Ribosomal_bS21_CS"/>
</dbReference>
<dbReference type="InterPro" id="IPR038380">
    <property type="entry name" value="Ribosomal_bS21_sf"/>
</dbReference>
<dbReference type="NCBIfam" id="TIGR00030">
    <property type="entry name" value="S21p"/>
    <property type="match status" value="1"/>
</dbReference>
<dbReference type="PANTHER" id="PTHR21109">
    <property type="entry name" value="MITOCHONDRIAL 28S RIBOSOMAL PROTEIN S21"/>
    <property type="match status" value="1"/>
</dbReference>
<dbReference type="PANTHER" id="PTHR21109:SF22">
    <property type="entry name" value="SMALL RIBOSOMAL SUBUNIT PROTEIN BS21"/>
    <property type="match status" value="1"/>
</dbReference>
<dbReference type="Pfam" id="PF01165">
    <property type="entry name" value="Ribosomal_S21"/>
    <property type="match status" value="1"/>
</dbReference>
<dbReference type="PRINTS" id="PR00976">
    <property type="entry name" value="RIBOSOMALS21"/>
</dbReference>
<dbReference type="PROSITE" id="PS01181">
    <property type="entry name" value="RIBOSOMAL_S21"/>
    <property type="match status" value="1"/>
</dbReference>
<feature type="chain" id="PRO_1000194297" description="Small ribosomal subunit protein bS21">
    <location>
        <begin position="1"/>
        <end position="57"/>
    </location>
</feature>
<feature type="region of interest" description="Disordered" evidence="2">
    <location>
        <begin position="24"/>
        <end position="57"/>
    </location>
</feature>
<feature type="compositionally biased region" description="Basic and acidic residues" evidence="2">
    <location>
        <begin position="31"/>
        <end position="42"/>
    </location>
</feature>
<feature type="compositionally biased region" description="Basic residues" evidence="2">
    <location>
        <begin position="43"/>
        <end position="57"/>
    </location>
</feature>
<evidence type="ECO:0000255" key="1">
    <source>
        <dbReference type="HAMAP-Rule" id="MF_00358"/>
    </source>
</evidence>
<evidence type="ECO:0000256" key="2">
    <source>
        <dbReference type="SAM" id="MobiDB-lite"/>
    </source>
</evidence>
<evidence type="ECO:0000305" key="3"/>
<comment type="similarity">
    <text evidence="1">Belongs to the bacterial ribosomal protein bS21 family.</text>
</comment>
<gene>
    <name evidence="1" type="primary">rpsU</name>
    <name type="ordered locus">LMHCC_1101</name>
</gene>
<keyword id="KW-0687">Ribonucleoprotein</keyword>
<keyword id="KW-0689">Ribosomal protein</keyword>
<accession>B8DE42</accession>
<proteinExistence type="inferred from homology"/>
<name>RS21_LISMH</name>
<sequence>MSKTVVRKNESLEDALRRFKRTVSKSGTLQESRKREFYEKPSVKRKKKSEAARKRKF</sequence>
<protein>
    <recommendedName>
        <fullName evidence="1">Small ribosomal subunit protein bS21</fullName>
    </recommendedName>
    <alternativeName>
        <fullName evidence="3">30S ribosomal protein S21</fullName>
    </alternativeName>
</protein>
<organism>
    <name type="scientific">Listeria monocytogenes serotype 4a (strain HCC23)</name>
    <dbReference type="NCBI Taxonomy" id="552536"/>
    <lineage>
        <taxon>Bacteria</taxon>
        <taxon>Bacillati</taxon>
        <taxon>Bacillota</taxon>
        <taxon>Bacilli</taxon>
        <taxon>Bacillales</taxon>
        <taxon>Listeriaceae</taxon>
        <taxon>Listeria</taxon>
    </lineage>
</organism>